<evidence type="ECO:0000255" key="1">
    <source>
        <dbReference type="HAMAP-Rule" id="MF_00199"/>
    </source>
</evidence>
<reference key="1">
    <citation type="submission" date="2007-05" db="EMBL/GenBank/DDBJ databases">
        <title>Complete sequence of Pseudomonas putida F1.</title>
        <authorList>
            <consortium name="US DOE Joint Genome Institute"/>
            <person name="Copeland A."/>
            <person name="Lucas S."/>
            <person name="Lapidus A."/>
            <person name="Barry K."/>
            <person name="Detter J.C."/>
            <person name="Glavina del Rio T."/>
            <person name="Hammon N."/>
            <person name="Israni S."/>
            <person name="Dalin E."/>
            <person name="Tice H."/>
            <person name="Pitluck S."/>
            <person name="Chain P."/>
            <person name="Malfatti S."/>
            <person name="Shin M."/>
            <person name="Vergez L."/>
            <person name="Schmutz J."/>
            <person name="Larimer F."/>
            <person name="Land M."/>
            <person name="Hauser L."/>
            <person name="Kyrpides N."/>
            <person name="Lykidis A."/>
            <person name="Parales R."/>
            <person name="Richardson P."/>
        </authorList>
    </citation>
    <scope>NUCLEOTIDE SEQUENCE [LARGE SCALE GENOMIC DNA]</scope>
    <source>
        <strain>ATCC 700007 / DSM 6899 / JCM 31910 / BCRC 17059 / LMG 24140 / F1</strain>
    </source>
</reference>
<protein>
    <recommendedName>
        <fullName evidence="1">Bis(5'-nucleosyl)-tetraphosphatase, symmetrical</fullName>
        <ecNumber evidence="1">3.6.1.41</ecNumber>
    </recommendedName>
    <alternativeName>
        <fullName evidence="1">Ap4A hydrolase</fullName>
    </alternativeName>
    <alternativeName>
        <fullName evidence="1">Diadenosine 5',5'''-P1,P4-tetraphosphate pyrophosphohydrolase</fullName>
    </alternativeName>
    <alternativeName>
        <fullName evidence="1">Diadenosine tetraphosphatase</fullName>
    </alternativeName>
</protein>
<dbReference type="EC" id="3.6.1.41" evidence="1"/>
<dbReference type="EMBL" id="CP000712">
    <property type="protein sequence ID" value="ABQ76603.1"/>
    <property type="molecule type" value="Genomic_DNA"/>
</dbReference>
<dbReference type="SMR" id="A5VXJ3"/>
<dbReference type="KEGG" id="ppf:Pput_0433"/>
<dbReference type="eggNOG" id="COG0639">
    <property type="taxonomic scope" value="Bacteria"/>
</dbReference>
<dbReference type="HOGENOM" id="CLU_056184_2_0_6"/>
<dbReference type="GO" id="GO:0008803">
    <property type="term" value="F:bis(5'-nucleosyl)-tetraphosphatase (symmetrical) activity"/>
    <property type="evidence" value="ECO:0007669"/>
    <property type="project" value="UniProtKB-UniRule"/>
</dbReference>
<dbReference type="CDD" id="cd07422">
    <property type="entry name" value="MPP_ApaH"/>
    <property type="match status" value="1"/>
</dbReference>
<dbReference type="Gene3D" id="3.60.21.10">
    <property type="match status" value="1"/>
</dbReference>
<dbReference type="HAMAP" id="MF_00199">
    <property type="entry name" value="ApaH"/>
    <property type="match status" value="1"/>
</dbReference>
<dbReference type="InterPro" id="IPR004617">
    <property type="entry name" value="ApaH"/>
</dbReference>
<dbReference type="InterPro" id="IPR004843">
    <property type="entry name" value="Calcineurin-like_PHP_ApaH"/>
</dbReference>
<dbReference type="InterPro" id="IPR029052">
    <property type="entry name" value="Metallo-depent_PP-like"/>
</dbReference>
<dbReference type="NCBIfam" id="TIGR00668">
    <property type="entry name" value="apaH"/>
    <property type="match status" value="1"/>
</dbReference>
<dbReference type="NCBIfam" id="NF001204">
    <property type="entry name" value="PRK00166.1"/>
    <property type="match status" value="1"/>
</dbReference>
<dbReference type="PANTHER" id="PTHR40942">
    <property type="match status" value="1"/>
</dbReference>
<dbReference type="PANTHER" id="PTHR40942:SF4">
    <property type="entry name" value="CYTOCHROME C5"/>
    <property type="match status" value="1"/>
</dbReference>
<dbReference type="Pfam" id="PF00149">
    <property type="entry name" value="Metallophos"/>
    <property type="match status" value="1"/>
</dbReference>
<dbReference type="PIRSF" id="PIRSF000903">
    <property type="entry name" value="B5n-ttraPtase_sm"/>
    <property type="match status" value="1"/>
</dbReference>
<dbReference type="SUPFAM" id="SSF56300">
    <property type="entry name" value="Metallo-dependent phosphatases"/>
    <property type="match status" value="1"/>
</dbReference>
<keyword id="KW-0378">Hydrolase</keyword>
<proteinExistence type="inferred from homology"/>
<feature type="chain" id="PRO_1000012080" description="Bis(5'-nucleosyl)-tetraphosphatase, symmetrical">
    <location>
        <begin position="1"/>
        <end position="288"/>
    </location>
</feature>
<name>APAH_PSEP1</name>
<sequence>MATYAVGDLQGCLQPLKCLLDRVSFNPAVDRLWLVGDLVNRGPESLETLRFLYSIRHSLVCVLGNHDLHLLAAWHNVERLKKSDTLREIIEAPDADQLFDWLRQQKLLHYDEPRGIALVHAGIPPQWTLGKALELAAEVEEVLRDDTRLQLYLDGMYGNEPNKWSKNLAGVERLRVITNYFTRMRFCTADGKLDLKSKEGLGSAPKGYKAWYAHKDRRSRHVKIIFGHWAALQGEVTEPDVIALDTGCVWGGAMTLYNVDSGEYHRCDCADDGTLRQPAQPTTLNDHT</sequence>
<gene>
    <name evidence="1" type="primary">apaH</name>
    <name type="ordered locus">Pput_0433</name>
</gene>
<accession>A5VXJ3</accession>
<organism>
    <name type="scientific">Pseudomonas putida (strain ATCC 700007 / DSM 6899 / JCM 31910 / BCRC 17059 / LMG 24140 / F1)</name>
    <dbReference type="NCBI Taxonomy" id="351746"/>
    <lineage>
        <taxon>Bacteria</taxon>
        <taxon>Pseudomonadati</taxon>
        <taxon>Pseudomonadota</taxon>
        <taxon>Gammaproteobacteria</taxon>
        <taxon>Pseudomonadales</taxon>
        <taxon>Pseudomonadaceae</taxon>
        <taxon>Pseudomonas</taxon>
    </lineage>
</organism>
<comment type="function">
    <text evidence="1">Hydrolyzes diadenosine 5',5'''-P1,P4-tetraphosphate to yield ADP.</text>
</comment>
<comment type="catalytic activity">
    <reaction evidence="1">
        <text>P(1),P(4)-bis(5'-adenosyl) tetraphosphate + H2O = 2 ADP + 2 H(+)</text>
        <dbReference type="Rhea" id="RHEA:24252"/>
        <dbReference type="ChEBI" id="CHEBI:15377"/>
        <dbReference type="ChEBI" id="CHEBI:15378"/>
        <dbReference type="ChEBI" id="CHEBI:58141"/>
        <dbReference type="ChEBI" id="CHEBI:456216"/>
        <dbReference type="EC" id="3.6.1.41"/>
    </reaction>
</comment>
<comment type="similarity">
    <text evidence="1">Belongs to the Ap4A hydrolase family.</text>
</comment>